<accession>Q8XD79</accession>
<accession>Q7AB11</accession>
<keyword id="KW-0378">Hydrolase</keyword>
<keyword id="KW-0479">Metal-binding</keyword>
<keyword id="KW-1185">Reference proteome</keyword>
<sequence length="461" mass="51043">MRVLIKNGTVVNADGQAKQDLLIESGIVRQLGNNISPQLPYEEIDATGCYVFPGGVDVHTHFNIDVGIARSCDDFFTGTRAAACGGTTTIIDHMGFGPNGCRLRHQLEVYRGYAAHKAVIDYSFHGVIQHINHAILDEIPMMVEEGLSSFKLYLTYQYKLNDDEVLQALRRLHESGALTTVHPENDAAIASKRAEFIAAGLTAPRYHALSRPLECEAEAIARMINLAQIAGNAPLYIVHLSNGLGLDYLRLARANHQPVWVETCPQYLLLDERSYDTEDGMKFILSPPLRNVREQDKLWCGISDGAIDVVATDHCTFSMAQRLQISKGDFSRCPNGLPGVENRMQLLFSSGVMTGRITPERFVELTSAMPARLFGLWPQKGLLAPGSDGDVVIIDPRQSQQIQHRHLHDNADYSPWEGFTCQGAIVRTLSRGETIFCDGTFTGKAGRGRFLRRKPFVPPVL</sequence>
<protein>
    <recommendedName>
        <fullName evidence="1">D-phenylhydantoinase</fullName>
        <ecNumber evidence="1">3.5.2.-</ecNumber>
    </recommendedName>
    <alternativeName>
        <fullName evidence="1">Hydantoin-utilizing enzyme HyuA</fullName>
    </alternativeName>
</protein>
<name>PHYDA_ECO57</name>
<proteinExistence type="inferred from homology"/>
<comment type="function">
    <text evidence="1">Catalyzes the stereospecific hydrolysis of the cyclic amide bond of D-hydantoin derivatives with an aromatic side chains at the 5'-position. Has no activity on dihydropyrimidines. The physiological function is unknown.</text>
</comment>
<comment type="catalytic activity">
    <reaction evidence="1">
        <text>D-5-phenylhydantoin + H2O = N-carbamoyl-D-phenylglycine + H(+)</text>
        <dbReference type="Rhea" id="RHEA:51664"/>
        <dbReference type="ChEBI" id="CHEBI:15377"/>
        <dbReference type="ChEBI" id="CHEBI:15378"/>
        <dbReference type="ChEBI" id="CHEBI:140750"/>
        <dbReference type="ChEBI" id="CHEBI:140758"/>
    </reaction>
</comment>
<comment type="cofactor">
    <cofactor evidence="1">
        <name>a divalent metal cation</name>
        <dbReference type="ChEBI" id="CHEBI:60240"/>
    </cofactor>
    <text evidence="1">Binds 2 divalent metal cations per subunit.</text>
</comment>
<comment type="subunit">
    <text evidence="1">Homotetramer.</text>
</comment>
<comment type="PTM">
    <text evidence="1">Carboxylation allows a single lysine to coordinate two divalent metal cations.</text>
</comment>
<comment type="similarity">
    <text evidence="1">Belongs to the metallo-dependent hydrolases superfamily. Hydantoinase/dihydropyrimidinase family.</text>
</comment>
<comment type="sequence caution" evidence="2">
    <conflict type="erroneous initiation">
        <sequence resource="EMBL-CDS" id="AAG58002"/>
    </conflict>
    <text>Extended N-terminus.</text>
</comment>
<gene>
    <name evidence="1" type="primary">hyuA</name>
    <name type="ordered locus">Z4212</name>
    <name type="ordered locus">ECs3746</name>
</gene>
<reference key="1">
    <citation type="journal article" date="2001" name="Nature">
        <title>Genome sequence of enterohaemorrhagic Escherichia coli O157:H7.</title>
        <authorList>
            <person name="Perna N.T."/>
            <person name="Plunkett G. III"/>
            <person name="Burland V."/>
            <person name="Mau B."/>
            <person name="Glasner J.D."/>
            <person name="Rose D.J."/>
            <person name="Mayhew G.F."/>
            <person name="Evans P.S."/>
            <person name="Gregor J."/>
            <person name="Kirkpatrick H.A."/>
            <person name="Posfai G."/>
            <person name="Hackett J."/>
            <person name="Klink S."/>
            <person name="Boutin A."/>
            <person name="Shao Y."/>
            <person name="Miller L."/>
            <person name="Grotbeck E.J."/>
            <person name="Davis N.W."/>
            <person name="Lim A."/>
            <person name="Dimalanta E.T."/>
            <person name="Potamousis K."/>
            <person name="Apodaca J."/>
            <person name="Anantharaman T.S."/>
            <person name="Lin J."/>
            <person name="Yen G."/>
            <person name="Schwartz D.C."/>
            <person name="Welch R.A."/>
            <person name="Blattner F.R."/>
        </authorList>
    </citation>
    <scope>NUCLEOTIDE SEQUENCE [LARGE SCALE GENOMIC DNA]</scope>
    <source>
        <strain>O157:H7 / EDL933 / ATCC 700927 / EHEC</strain>
    </source>
</reference>
<reference key="2">
    <citation type="journal article" date="2001" name="DNA Res.">
        <title>Complete genome sequence of enterohemorrhagic Escherichia coli O157:H7 and genomic comparison with a laboratory strain K-12.</title>
        <authorList>
            <person name="Hayashi T."/>
            <person name="Makino K."/>
            <person name="Ohnishi M."/>
            <person name="Kurokawa K."/>
            <person name="Ishii K."/>
            <person name="Yokoyama K."/>
            <person name="Han C.-G."/>
            <person name="Ohtsubo E."/>
            <person name="Nakayama K."/>
            <person name="Murata T."/>
            <person name="Tanaka M."/>
            <person name="Tobe T."/>
            <person name="Iida T."/>
            <person name="Takami H."/>
            <person name="Honda T."/>
            <person name="Sasakawa C."/>
            <person name="Ogasawara N."/>
            <person name="Yasunaga T."/>
            <person name="Kuhara S."/>
            <person name="Shiba T."/>
            <person name="Hattori M."/>
            <person name="Shinagawa H."/>
        </authorList>
    </citation>
    <scope>NUCLEOTIDE SEQUENCE [LARGE SCALE GENOMIC DNA]</scope>
    <source>
        <strain>O157:H7 / Sakai / RIMD 0509952 / EHEC</strain>
    </source>
</reference>
<evidence type="ECO:0000255" key="1">
    <source>
        <dbReference type="HAMAP-Rule" id="MF_01644"/>
    </source>
</evidence>
<evidence type="ECO:0000305" key="2"/>
<feature type="chain" id="PRO_0000317650" description="D-phenylhydantoinase">
    <location>
        <begin position="1"/>
        <end position="461"/>
    </location>
</feature>
<feature type="binding site" evidence="1">
    <location>
        <position position="59"/>
    </location>
    <ligand>
        <name>a divalent metal cation</name>
        <dbReference type="ChEBI" id="CHEBI:60240"/>
        <label>1</label>
    </ligand>
</feature>
<feature type="binding site" evidence="1">
    <location>
        <position position="61"/>
    </location>
    <ligand>
        <name>a divalent metal cation</name>
        <dbReference type="ChEBI" id="CHEBI:60240"/>
        <label>1</label>
    </ligand>
</feature>
<feature type="binding site" description="via carbamate group" evidence="1">
    <location>
        <position position="151"/>
    </location>
    <ligand>
        <name>a divalent metal cation</name>
        <dbReference type="ChEBI" id="CHEBI:60240"/>
        <label>1</label>
    </ligand>
</feature>
<feature type="binding site" description="via carbamate group" evidence="1">
    <location>
        <position position="151"/>
    </location>
    <ligand>
        <name>a divalent metal cation</name>
        <dbReference type="ChEBI" id="CHEBI:60240"/>
        <label>2</label>
    </ligand>
</feature>
<feature type="binding site" evidence="1">
    <location>
        <position position="156"/>
    </location>
    <ligand>
        <name>substrate</name>
    </ligand>
</feature>
<feature type="binding site" evidence="1">
    <location>
        <position position="182"/>
    </location>
    <ligand>
        <name>a divalent metal cation</name>
        <dbReference type="ChEBI" id="CHEBI:60240"/>
        <label>2</label>
    </ligand>
</feature>
<feature type="binding site" evidence="1">
    <location>
        <position position="239"/>
    </location>
    <ligand>
        <name>a divalent metal cation</name>
        <dbReference type="ChEBI" id="CHEBI:60240"/>
        <label>2</label>
    </ligand>
</feature>
<feature type="binding site" evidence="1">
    <location>
        <position position="286"/>
    </location>
    <ligand>
        <name>substrate</name>
    </ligand>
</feature>
<feature type="binding site" evidence="1">
    <location>
        <position position="313"/>
    </location>
    <ligand>
        <name>a divalent metal cation</name>
        <dbReference type="ChEBI" id="CHEBI:60240"/>
        <label>1</label>
    </ligand>
</feature>
<feature type="binding site" evidence="1">
    <location>
        <position position="335"/>
    </location>
    <ligand>
        <name>substrate</name>
    </ligand>
</feature>
<feature type="modified residue" description="N6-carboxylysine" evidence="1">
    <location>
        <position position="151"/>
    </location>
</feature>
<organism>
    <name type="scientific">Escherichia coli O157:H7</name>
    <dbReference type="NCBI Taxonomy" id="83334"/>
    <lineage>
        <taxon>Bacteria</taxon>
        <taxon>Pseudomonadati</taxon>
        <taxon>Pseudomonadota</taxon>
        <taxon>Gammaproteobacteria</taxon>
        <taxon>Enterobacterales</taxon>
        <taxon>Enterobacteriaceae</taxon>
        <taxon>Escherichia</taxon>
    </lineage>
</organism>
<dbReference type="EC" id="3.5.2.-" evidence="1"/>
<dbReference type="EMBL" id="AE005174">
    <property type="protein sequence ID" value="AAG58002.1"/>
    <property type="status" value="ALT_INIT"/>
    <property type="molecule type" value="Genomic_DNA"/>
</dbReference>
<dbReference type="EMBL" id="BA000007">
    <property type="protein sequence ID" value="BAB37169.2"/>
    <property type="molecule type" value="Genomic_DNA"/>
</dbReference>
<dbReference type="PIR" id="B91097">
    <property type="entry name" value="B91097"/>
</dbReference>
<dbReference type="PIR" id="F85942">
    <property type="entry name" value="F85942"/>
</dbReference>
<dbReference type="RefSeq" id="NP_311773.2">
    <property type="nucleotide sequence ID" value="NC_002695.1"/>
</dbReference>
<dbReference type="RefSeq" id="WP_001264452.1">
    <property type="nucleotide sequence ID" value="NZ_VOAI01000003.1"/>
</dbReference>
<dbReference type="SMR" id="Q8XD79"/>
<dbReference type="STRING" id="155864.Z4212"/>
<dbReference type="GeneID" id="916437"/>
<dbReference type="GeneID" id="93779129"/>
<dbReference type="KEGG" id="ece:Z4212"/>
<dbReference type="KEGG" id="ecs:ECs_3746"/>
<dbReference type="PATRIC" id="fig|386585.9.peg.3908"/>
<dbReference type="eggNOG" id="COG0044">
    <property type="taxonomic scope" value="Bacteria"/>
</dbReference>
<dbReference type="HOGENOM" id="CLU_015572_2_0_6"/>
<dbReference type="OMA" id="SAETHHM"/>
<dbReference type="Proteomes" id="UP000000558">
    <property type="component" value="Chromosome"/>
</dbReference>
<dbReference type="Proteomes" id="UP000002519">
    <property type="component" value="Chromosome"/>
</dbReference>
<dbReference type="GO" id="GO:0005829">
    <property type="term" value="C:cytosol"/>
    <property type="evidence" value="ECO:0007669"/>
    <property type="project" value="TreeGrafter"/>
</dbReference>
<dbReference type="GO" id="GO:0016812">
    <property type="term" value="F:hydrolase activity, acting on carbon-nitrogen (but not peptide) bonds, in cyclic amides"/>
    <property type="evidence" value="ECO:0007669"/>
    <property type="project" value="UniProtKB-UniRule"/>
</dbReference>
<dbReference type="GO" id="GO:0046872">
    <property type="term" value="F:metal ion binding"/>
    <property type="evidence" value="ECO:0007669"/>
    <property type="project" value="UniProtKB-KW"/>
</dbReference>
<dbReference type="GO" id="GO:0006208">
    <property type="term" value="P:pyrimidine nucleobase catabolic process"/>
    <property type="evidence" value="ECO:0007669"/>
    <property type="project" value="InterPro"/>
</dbReference>
<dbReference type="CDD" id="cd01314">
    <property type="entry name" value="D-HYD"/>
    <property type="match status" value="1"/>
</dbReference>
<dbReference type="FunFam" id="3.20.20.140:FF:000026">
    <property type="entry name" value="D-phenylhydantoinase"/>
    <property type="match status" value="1"/>
</dbReference>
<dbReference type="Gene3D" id="3.20.20.140">
    <property type="entry name" value="Metal-dependent hydrolases"/>
    <property type="match status" value="1"/>
</dbReference>
<dbReference type="Gene3D" id="2.30.40.10">
    <property type="entry name" value="Urease, subunit C, domain 1"/>
    <property type="match status" value="1"/>
</dbReference>
<dbReference type="HAMAP" id="MF_01644">
    <property type="entry name" value="D_hydantoinase"/>
    <property type="match status" value="1"/>
</dbReference>
<dbReference type="InterPro" id="IPR006680">
    <property type="entry name" value="Amidohydro-rel"/>
</dbReference>
<dbReference type="InterPro" id="IPR023766">
    <property type="entry name" value="D_phenylhydantoinase"/>
</dbReference>
<dbReference type="InterPro" id="IPR011778">
    <property type="entry name" value="Hydantoinase/dihydroPyrase"/>
</dbReference>
<dbReference type="InterPro" id="IPR011059">
    <property type="entry name" value="Metal-dep_hydrolase_composite"/>
</dbReference>
<dbReference type="InterPro" id="IPR032466">
    <property type="entry name" value="Metal_Hydrolase"/>
</dbReference>
<dbReference type="InterPro" id="IPR050378">
    <property type="entry name" value="Metallo-dep_Hydrolases_sf"/>
</dbReference>
<dbReference type="NCBIfam" id="TIGR02033">
    <property type="entry name" value="D-hydantoinase"/>
    <property type="match status" value="1"/>
</dbReference>
<dbReference type="PANTHER" id="PTHR11647:SF1">
    <property type="entry name" value="COLLAPSIN RESPONSE MEDIATOR PROTEIN"/>
    <property type="match status" value="1"/>
</dbReference>
<dbReference type="PANTHER" id="PTHR11647">
    <property type="entry name" value="HYDRANTOINASE/DIHYDROPYRIMIDINASE FAMILY MEMBER"/>
    <property type="match status" value="1"/>
</dbReference>
<dbReference type="Pfam" id="PF01979">
    <property type="entry name" value="Amidohydro_1"/>
    <property type="match status" value="1"/>
</dbReference>
<dbReference type="SUPFAM" id="SSF51338">
    <property type="entry name" value="Composite domain of metallo-dependent hydrolases"/>
    <property type="match status" value="2"/>
</dbReference>
<dbReference type="SUPFAM" id="SSF51556">
    <property type="entry name" value="Metallo-dependent hydrolases"/>
    <property type="match status" value="1"/>
</dbReference>